<name>PYRG_METSB</name>
<keyword id="KW-0067">ATP-binding</keyword>
<keyword id="KW-0315">Glutamine amidotransferase</keyword>
<keyword id="KW-0436">Ligase</keyword>
<keyword id="KW-0460">Magnesium</keyword>
<keyword id="KW-0479">Metal-binding</keyword>
<keyword id="KW-0547">Nucleotide-binding</keyword>
<keyword id="KW-0665">Pyrimidine biosynthesis</keyword>
<keyword id="KW-1185">Reference proteome</keyword>
<evidence type="ECO:0000255" key="1">
    <source>
        <dbReference type="HAMAP-Rule" id="MF_01227"/>
    </source>
</evidence>
<gene>
    <name evidence="1" type="primary">pyrG</name>
    <name type="ordered locus">Msil_0510</name>
</gene>
<protein>
    <recommendedName>
        <fullName evidence="1">CTP synthase</fullName>
        <ecNumber evidence="1">6.3.4.2</ecNumber>
    </recommendedName>
    <alternativeName>
        <fullName evidence="1">Cytidine 5'-triphosphate synthase</fullName>
    </alternativeName>
    <alternativeName>
        <fullName evidence="1">Cytidine triphosphate synthetase</fullName>
        <shortName evidence="1">CTP synthetase</shortName>
        <shortName evidence="1">CTPS</shortName>
    </alternativeName>
    <alternativeName>
        <fullName evidence="1">UTP--ammonia ligase</fullName>
    </alternativeName>
</protein>
<feature type="chain" id="PRO_1000164951" description="CTP synthase">
    <location>
        <begin position="1"/>
        <end position="542"/>
    </location>
</feature>
<feature type="domain" description="Glutamine amidotransferase type-1" evidence="1">
    <location>
        <begin position="291"/>
        <end position="541"/>
    </location>
</feature>
<feature type="region of interest" description="Amidoligase domain" evidence="1">
    <location>
        <begin position="1"/>
        <end position="265"/>
    </location>
</feature>
<feature type="active site" description="Nucleophile; for glutamine hydrolysis" evidence="1">
    <location>
        <position position="380"/>
    </location>
</feature>
<feature type="active site" evidence="1">
    <location>
        <position position="514"/>
    </location>
</feature>
<feature type="active site" evidence="1">
    <location>
        <position position="516"/>
    </location>
</feature>
<feature type="binding site" evidence="1">
    <location>
        <position position="13"/>
    </location>
    <ligand>
        <name>CTP</name>
        <dbReference type="ChEBI" id="CHEBI:37563"/>
        <note>allosteric inhibitor</note>
    </ligand>
</feature>
<feature type="binding site" evidence="1">
    <location>
        <position position="13"/>
    </location>
    <ligand>
        <name>UTP</name>
        <dbReference type="ChEBI" id="CHEBI:46398"/>
    </ligand>
</feature>
<feature type="binding site" evidence="1">
    <location>
        <begin position="14"/>
        <end position="19"/>
    </location>
    <ligand>
        <name>ATP</name>
        <dbReference type="ChEBI" id="CHEBI:30616"/>
    </ligand>
</feature>
<feature type="binding site" evidence="1">
    <location>
        <position position="54"/>
    </location>
    <ligand>
        <name>L-glutamine</name>
        <dbReference type="ChEBI" id="CHEBI:58359"/>
    </ligand>
</feature>
<feature type="binding site" evidence="1">
    <location>
        <position position="71"/>
    </location>
    <ligand>
        <name>ATP</name>
        <dbReference type="ChEBI" id="CHEBI:30616"/>
    </ligand>
</feature>
<feature type="binding site" evidence="1">
    <location>
        <position position="71"/>
    </location>
    <ligand>
        <name>Mg(2+)</name>
        <dbReference type="ChEBI" id="CHEBI:18420"/>
    </ligand>
</feature>
<feature type="binding site" evidence="1">
    <location>
        <position position="139"/>
    </location>
    <ligand>
        <name>Mg(2+)</name>
        <dbReference type="ChEBI" id="CHEBI:18420"/>
    </ligand>
</feature>
<feature type="binding site" evidence="1">
    <location>
        <begin position="146"/>
        <end position="148"/>
    </location>
    <ligand>
        <name>CTP</name>
        <dbReference type="ChEBI" id="CHEBI:37563"/>
        <note>allosteric inhibitor</note>
    </ligand>
</feature>
<feature type="binding site" evidence="1">
    <location>
        <begin position="186"/>
        <end position="191"/>
    </location>
    <ligand>
        <name>CTP</name>
        <dbReference type="ChEBI" id="CHEBI:37563"/>
        <note>allosteric inhibitor</note>
    </ligand>
</feature>
<feature type="binding site" evidence="1">
    <location>
        <begin position="186"/>
        <end position="191"/>
    </location>
    <ligand>
        <name>UTP</name>
        <dbReference type="ChEBI" id="CHEBI:46398"/>
    </ligand>
</feature>
<feature type="binding site" evidence="1">
    <location>
        <position position="222"/>
    </location>
    <ligand>
        <name>CTP</name>
        <dbReference type="ChEBI" id="CHEBI:37563"/>
        <note>allosteric inhibitor</note>
    </ligand>
</feature>
<feature type="binding site" evidence="1">
    <location>
        <position position="222"/>
    </location>
    <ligand>
        <name>UTP</name>
        <dbReference type="ChEBI" id="CHEBI:46398"/>
    </ligand>
</feature>
<feature type="binding site" evidence="1">
    <location>
        <begin position="238"/>
        <end position="240"/>
    </location>
    <ligand>
        <name>ATP</name>
        <dbReference type="ChEBI" id="CHEBI:30616"/>
    </ligand>
</feature>
<feature type="binding site" evidence="1">
    <location>
        <position position="353"/>
    </location>
    <ligand>
        <name>L-glutamine</name>
        <dbReference type="ChEBI" id="CHEBI:58359"/>
    </ligand>
</feature>
<feature type="binding site" evidence="1">
    <location>
        <begin position="381"/>
        <end position="384"/>
    </location>
    <ligand>
        <name>L-glutamine</name>
        <dbReference type="ChEBI" id="CHEBI:58359"/>
    </ligand>
</feature>
<feature type="binding site" evidence="1">
    <location>
        <position position="404"/>
    </location>
    <ligand>
        <name>L-glutamine</name>
        <dbReference type="ChEBI" id="CHEBI:58359"/>
    </ligand>
</feature>
<feature type="binding site" evidence="1">
    <location>
        <position position="469"/>
    </location>
    <ligand>
        <name>L-glutamine</name>
        <dbReference type="ChEBI" id="CHEBI:58359"/>
    </ligand>
</feature>
<proteinExistence type="inferred from homology"/>
<reference key="1">
    <citation type="journal article" date="2010" name="J. Bacteriol.">
        <title>Complete genome sequence of the aerobic facultative methanotroph Methylocella silvestris BL2.</title>
        <authorList>
            <person name="Chen Y."/>
            <person name="Crombie A."/>
            <person name="Rahman M.T."/>
            <person name="Dedysh S.N."/>
            <person name="Liesack W."/>
            <person name="Stott M.B."/>
            <person name="Alam M."/>
            <person name="Theisen A.R."/>
            <person name="Murrell J.C."/>
            <person name="Dunfield P.F."/>
        </authorList>
    </citation>
    <scope>NUCLEOTIDE SEQUENCE [LARGE SCALE GENOMIC DNA]</scope>
    <source>
        <strain>DSM 15510 / CIP 108128 / LMG 27833 / NCIMB 13906 / BL2</strain>
    </source>
</reference>
<comment type="function">
    <text evidence="1">Catalyzes the ATP-dependent amination of UTP to CTP with either L-glutamine or ammonia as the source of nitrogen. Regulates intracellular CTP levels through interactions with the four ribonucleotide triphosphates.</text>
</comment>
<comment type="catalytic activity">
    <reaction evidence="1">
        <text>UTP + L-glutamine + ATP + H2O = CTP + L-glutamate + ADP + phosphate + 2 H(+)</text>
        <dbReference type="Rhea" id="RHEA:26426"/>
        <dbReference type="ChEBI" id="CHEBI:15377"/>
        <dbReference type="ChEBI" id="CHEBI:15378"/>
        <dbReference type="ChEBI" id="CHEBI:29985"/>
        <dbReference type="ChEBI" id="CHEBI:30616"/>
        <dbReference type="ChEBI" id="CHEBI:37563"/>
        <dbReference type="ChEBI" id="CHEBI:43474"/>
        <dbReference type="ChEBI" id="CHEBI:46398"/>
        <dbReference type="ChEBI" id="CHEBI:58359"/>
        <dbReference type="ChEBI" id="CHEBI:456216"/>
        <dbReference type="EC" id="6.3.4.2"/>
    </reaction>
</comment>
<comment type="catalytic activity">
    <reaction evidence="1">
        <text>L-glutamine + H2O = L-glutamate + NH4(+)</text>
        <dbReference type="Rhea" id="RHEA:15889"/>
        <dbReference type="ChEBI" id="CHEBI:15377"/>
        <dbReference type="ChEBI" id="CHEBI:28938"/>
        <dbReference type="ChEBI" id="CHEBI:29985"/>
        <dbReference type="ChEBI" id="CHEBI:58359"/>
    </reaction>
</comment>
<comment type="catalytic activity">
    <reaction evidence="1">
        <text>UTP + NH4(+) + ATP = CTP + ADP + phosphate + 2 H(+)</text>
        <dbReference type="Rhea" id="RHEA:16597"/>
        <dbReference type="ChEBI" id="CHEBI:15378"/>
        <dbReference type="ChEBI" id="CHEBI:28938"/>
        <dbReference type="ChEBI" id="CHEBI:30616"/>
        <dbReference type="ChEBI" id="CHEBI:37563"/>
        <dbReference type="ChEBI" id="CHEBI:43474"/>
        <dbReference type="ChEBI" id="CHEBI:46398"/>
        <dbReference type="ChEBI" id="CHEBI:456216"/>
    </reaction>
</comment>
<comment type="activity regulation">
    <text evidence="1">Allosterically activated by GTP, when glutamine is the substrate; GTP has no effect on the reaction when ammonia is the substrate. The allosteric effector GTP functions by stabilizing the protein conformation that binds the tetrahedral intermediate(s) formed during glutamine hydrolysis. Inhibited by the product CTP, via allosteric rather than competitive inhibition.</text>
</comment>
<comment type="pathway">
    <text evidence="1">Pyrimidine metabolism; CTP biosynthesis via de novo pathway; CTP from UDP: step 2/2.</text>
</comment>
<comment type="subunit">
    <text evidence="1">Homotetramer.</text>
</comment>
<comment type="miscellaneous">
    <text evidence="1">CTPSs have evolved a hybrid strategy for distinguishing between UTP and CTP. The overlapping regions of the product feedback inhibitory and substrate sites recognize a common feature in both compounds, the triphosphate moiety. To differentiate isosteric substrate and product pyrimidine rings, an additional pocket far from the expected kinase/ligase catalytic site, specifically recognizes the cytosine and ribose portions of the product inhibitor.</text>
</comment>
<comment type="similarity">
    <text evidence="1">Belongs to the CTP synthase family.</text>
</comment>
<accession>B8EJS8</accession>
<organism>
    <name type="scientific">Methylocella silvestris (strain DSM 15510 / CIP 108128 / LMG 27833 / NCIMB 13906 / BL2)</name>
    <dbReference type="NCBI Taxonomy" id="395965"/>
    <lineage>
        <taxon>Bacteria</taxon>
        <taxon>Pseudomonadati</taxon>
        <taxon>Pseudomonadota</taxon>
        <taxon>Alphaproteobacteria</taxon>
        <taxon>Hyphomicrobiales</taxon>
        <taxon>Beijerinckiaceae</taxon>
        <taxon>Methylocella</taxon>
    </lineage>
</organism>
<sequence>MARYIFITGGVVSSLGKGLASAALGALLQARGYTVRLRKLDPYLNIDPGTMSPYQHGEVFVTDDGAETDLDLGHYERFTGRPALRDDNITTGRIYQEIIAKERRGDYLGATVQVIPHVTNAIKDFVLSGTDGVDFVLVEIGGTVGDIEGLPFFEAIRQLGNDLPRSHAIYIHLTLLPFIPSAGELKTKPTQHSVKELRSIGIQPHILLCRTDRTIPREERRKLGLFCNVRESAVIEARDVQSIYDVPRAYHAAGLDQEVLAAFGIEPAPKPDMSRWNAVMERVHNPEGEVTIAIVGKYTGLKDAYKSLIEALAHGGMANRINVRIDWIESEVFESDDPAVYLDHVHGILVPGGFGQRGAEGKILAARFARERKVPYFGICFGMQMAVIEAARSLAGVKDANSTEFGPTKEPVVGLMTEWMRGNELQIRAAESDLGGTMRLGAYRASLAPHSKIAAIYGATEISERHRHRYEVNTAYRERLAENGVIFAGLSPDGLLPETIELLDHPWFIGVQFHPELKSRPFEPHPLFASFIAAALEQSRLV</sequence>
<dbReference type="EC" id="6.3.4.2" evidence="1"/>
<dbReference type="EMBL" id="CP001280">
    <property type="protein sequence ID" value="ACK49482.1"/>
    <property type="molecule type" value="Genomic_DNA"/>
</dbReference>
<dbReference type="RefSeq" id="WP_012589552.1">
    <property type="nucleotide sequence ID" value="NC_011666.1"/>
</dbReference>
<dbReference type="SMR" id="B8EJS8"/>
<dbReference type="STRING" id="395965.Msil_0510"/>
<dbReference type="MEROPS" id="C26.964"/>
<dbReference type="KEGG" id="msl:Msil_0510"/>
<dbReference type="eggNOG" id="COG0504">
    <property type="taxonomic scope" value="Bacteria"/>
</dbReference>
<dbReference type="HOGENOM" id="CLU_011675_5_0_5"/>
<dbReference type="OrthoDB" id="9801107at2"/>
<dbReference type="UniPathway" id="UPA00159">
    <property type="reaction ID" value="UER00277"/>
</dbReference>
<dbReference type="Proteomes" id="UP000002257">
    <property type="component" value="Chromosome"/>
</dbReference>
<dbReference type="GO" id="GO:0005829">
    <property type="term" value="C:cytosol"/>
    <property type="evidence" value="ECO:0007669"/>
    <property type="project" value="TreeGrafter"/>
</dbReference>
<dbReference type="GO" id="GO:0005524">
    <property type="term" value="F:ATP binding"/>
    <property type="evidence" value="ECO:0007669"/>
    <property type="project" value="UniProtKB-KW"/>
</dbReference>
<dbReference type="GO" id="GO:0003883">
    <property type="term" value="F:CTP synthase activity"/>
    <property type="evidence" value="ECO:0007669"/>
    <property type="project" value="UniProtKB-UniRule"/>
</dbReference>
<dbReference type="GO" id="GO:0004359">
    <property type="term" value="F:glutaminase activity"/>
    <property type="evidence" value="ECO:0007669"/>
    <property type="project" value="RHEA"/>
</dbReference>
<dbReference type="GO" id="GO:0042802">
    <property type="term" value="F:identical protein binding"/>
    <property type="evidence" value="ECO:0007669"/>
    <property type="project" value="TreeGrafter"/>
</dbReference>
<dbReference type="GO" id="GO:0046872">
    <property type="term" value="F:metal ion binding"/>
    <property type="evidence" value="ECO:0007669"/>
    <property type="project" value="UniProtKB-KW"/>
</dbReference>
<dbReference type="GO" id="GO:0044210">
    <property type="term" value="P:'de novo' CTP biosynthetic process"/>
    <property type="evidence" value="ECO:0007669"/>
    <property type="project" value="UniProtKB-UniRule"/>
</dbReference>
<dbReference type="GO" id="GO:0019856">
    <property type="term" value="P:pyrimidine nucleobase biosynthetic process"/>
    <property type="evidence" value="ECO:0007669"/>
    <property type="project" value="TreeGrafter"/>
</dbReference>
<dbReference type="CDD" id="cd03113">
    <property type="entry name" value="CTPS_N"/>
    <property type="match status" value="1"/>
</dbReference>
<dbReference type="CDD" id="cd01746">
    <property type="entry name" value="GATase1_CTP_Synthase"/>
    <property type="match status" value="1"/>
</dbReference>
<dbReference type="FunFam" id="3.40.50.300:FF:000009">
    <property type="entry name" value="CTP synthase"/>
    <property type="match status" value="1"/>
</dbReference>
<dbReference type="FunFam" id="3.40.50.880:FF:000002">
    <property type="entry name" value="CTP synthase"/>
    <property type="match status" value="1"/>
</dbReference>
<dbReference type="Gene3D" id="3.40.50.880">
    <property type="match status" value="1"/>
</dbReference>
<dbReference type="Gene3D" id="3.40.50.300">
    <property type="entry name" value="P-loop containing nucleotide triphosphate hydrolases"/>
    <property type="match status" value="1"/>
</dbReference>
<dbReference type="HAMAP" id="MF_01227">
    <property type="entry name" value="PyrG"/>
    <property type="match status" value="1"/>
</dbReference>
<dbReference type="InterPro" id="IPR029062">
    <property type="entry name" value="Class_I_gatase-like"/>
</dbReference>
<dbReference type="InterPro" id="IPR004468">
    <property type="entry name" value="CTP_synthase"/>
</dbReference>
<dbReference type="InterPro" id="IPR017456">
    <property type="entry name" value="CTP_synthase_N"/>
</dbReference>
<dbReference type="InterPro" id="IPR017926">
    <property type="entry name" value="GATASE"/>
</dbReference>
<dbReference type="InterPro" id="IPR033828">
    <property type="entry name" value="GATase1_CTP_Synthase"/>
</dbReference>
<dbReference type="InterPro" id="IPR027417">
    <property type="entry name" value="P-loop_NTPase"/>
</dbReference>
<dbReference type="NCBIfam" id="NF003792">
    <property type="entry name" value="PRK05380.1"/>
    <property type="match status" value="1"/>
</dbReference>
<dbReference type="NCBIfam" id="TIGR00337">
    <property type="entry name" value="PyrG"/>
    <property type="match status" value="1"/>
</dbReference>
<dbReference type="PANTHER" id="PTHR11550">
    <property type="entry name" value="CTP SYNTHASE"/>
    <property type="match status" value="1"/>
</dbReference>
<dbReference type="PANTHER" id="PTHR11550:SF0">
    <property type="entry name" value="CTP SYNTHASE-RELATED"/>
    <property type="match status" value="1"/>
</dbReference>
<dbReference type="Pfam" id="PF06418">
    <property type="entry name" value="CTP_synth_N"/>
    <property type="match status" value="1"/>
</dbReference>
<dbReference type="Pfam" id="PF00117">
    <property type="entry name" value="GATase"/>
    <property type="match status" value="1"/>
</dbReference>
<dbReference type="SUPFAM" id="SSF52317">
    <property type="entry name" value="Class I glutamine amidotransferase-like"/>
    <property type="match status" value="1"/>
</dbReference>
<dbReference type="SUPFAM" id="SSF52540">
    <property type="entry name" value="P-loop containing nucleoside triphosphate hydrolases"/>
    <property type="match status" value="1"/>
</dbReference>
<dbReference type="PROSITE" id="PS51273">
    <property type="entry name" value="GATASE_TYPE_1"/>
    <property type="match status" value="1"/>
</dbReference>